<evidence type="ECO:0000255" key="1">
    <source>
        <dbReference type="HAMAP-Rule" id="MF_00498"/>
    </source>
</evidence>
<gene>
    <name type="ordered locus">Mbur_1033</name>
</gene>
<organism>
    <name type="scientific">Methanococcoides burtonii (strain DSM 6242 / NBRC 107633 / OCM 468 / ACE-M)</name>
    <dbReference type="NCBI Taxonomy" id="259564"/>
    <lineage>
        <taxon>Archaea</taxon>
        <taxon>Methanobacteriati</taxon>
        <taxon>Methanobacteriota</taxon>
        <taxon>Stenosarchaea group</taxon>
        <taxon>Methanomicrobia</taxon>
        <taxon>Methanosarcinales</taxon>
        <taxon>Methanosarcinaceae</taxon>
        <taxon>Methanococcoides</taxon>
    </lineage>
</organism>
<proteinExistence type="inferred from homology"/>
<protein>
    <recommendedName>
        <fullName evidence="1">UPF0179 protein Mbur_1033</fullName>
    </recommendedName>
</protein>
<sequence>MEDMDTTITLIGTRLAKEGVEFFFDGDTPECEQCKLKNTCMSLEKGKKYRVVKVRNNTLHECFVHDKGAMVVDVVKAPIFALLDSKKAIEGSKIRYQAPKCDEKLDAETYELCYPKGLRNGERCTVLKVMGTVEMEADPSITLKKVELLP</sequence>
<accession>Q12X58</accession>
<dbReference type="EMBL" id="CP000300">
    <property type="protein sequence ID" value="ABE51968.1"/>
    <property type="molecule type" value="Genomic_DNA"/>
</dbReference>
<dbReference type="RefSeq" id="WP_011499117.1">
    <property type="nucleotide sequence ID" value="NC_007955.1"/>
</dbReference>
<dbReference type="STRING" id="259564.Mbur_1033"/>
<dbReference type="GeneID" id="3998773"/>
<dbReference type="KEGG" id="mbu:Mbur_1033"/>
<dbReference type="HOGENOM" id="CLU_121764_0_0_2"/>
<dbReference type="OrthoDB" id="24613at2157"/>
<dbReference type="Proteomes" id="UP000001979">
    <property type="component" value="Chromosome"/>
</dbReference>
<dbReference type="HAMAP" id="MF_00498">
    <property type="entry name" value="UPF0179"/>
    <property type="match status" value="1"/>
</dbReference>
<dbReference type="InterPro" id="IPR005369">
    <property type="entry name" value="UPF0179"/>
</dbReference>
<dbReference type="PANTHER" id="PTHR40699">
    <property type="entry name" value="UPF0179 PROTEIN MJ1627"/>
    <property type="match status" value="1"/>
</dbReference>
<dbReference type="PANTHER" id="PTHR40699:SF1">
    <property type="entry name" value="UPF0179 PROTEIN MJ1627"/>
    <property type="match status" value="1"/>
</dbReference>
<dbReference type="Pfam" id="PF03684">
    <property type="entry name" value="UPF0179"/>
    <property type="match status" value="1"/>
</dbReference>
<dbReference type="PIRSF" id="PIRSF006595">
    <property type="entry name" value="UCP006595"/>
    <property type="match status" value="1"/>
</dbReference>
<comment type="similarity">
    <text evidence="1">Belongs to the UPF0179 family.</text>
</comment>
<reference key="1">
    <citation type="journal article" date="2009" name="ISME J.">
        <title>The genome sequence of the psychrophilic archaeon, Methanococcoides burtonii: the role of genome evolution in cold adaptation.</title>
        <authorList>
            <person name="Allen M.A."/>
            <person name="Lauro F.M."/>
            <person name="Williams T.J."/>
            <person name="Burg D."/>
            <person name="Siddiqui K.S."/>
            <person name="De Francisci D."/>
            <person name="Chong K.W."/>
            <person name="Pilak O."/>
            <person name="Chew H.H."/>
            <person name="De Maere M.Z."/>
            <person name="Ting L."/>
            <person name="Katrib M."/>
            <person name="Ng C."/>
            <person name="Sowers K.R."/>
            <person name="Galperin M.Y."/>
            <person name="Anderson I.J."/>
            <person name="Ivanova N."/>
            <person name="Dalin E."/>
            <person name="Martinez M."/>
            <person name="Lapidus A."/>
            <person name="Hauser L."/>
            <person name="Land M."/>
            <person name="Thomas T."/>
            <person name="Cavicchioli R."/>
        </authorList>
    </citation>
    <scope>NUCLEOTIDE SEQUENCE [LARGE SCALE GENOMIC DNA]</scope>
    <source>
        <strain>DSM 6242 / NBRC 107633 / OCM 468 / ACE-M</strain>
    </source>
</reference>
<feature type="chain" id="PRO_0000378117" description="UPF0179 protein Mbur_1033">
    <location>
        <begin position="1"/>
        <end position="150"/>
    </location>
</feature>
<name>Y1033_METBU</name>